<proteinExistence type="inferred from homology"/>
<geneLocation type="chloroplast"/>
<organism>
    <name type="scientific">Morus indica</name>
    <name type="common">Mulberry</name>
    <dbReference type="NCBI Taxonomy" id="248361"/>
    <lineage>
        <taxon>Eukaryota</taxon>
        <taxon>Viridiplantae</taxon>
        <taxon>Streptophyta</taxon>
        <taxon>Embryophyta</taxon>
        <taxon>Tracheophyta</taxon>
        <taxon>Spermatophyta</taxon>
        <taxon>Magnoliopsida</taxon>
        <taxon>eudicotyledons</taxon>
        <taxon>Gunneridae</taxon>
        <taxon>Pentapetalae</taxon>
        <taxon>rosids</taxon>
        <taxon>fabids</taxon>
        <taxon>Rosales</taxon>
        <taxon>Moraceae</taxon>
        <taxon>Moreae</taxon>
        <taxon>Morus</taxon>
    </lineage>
</organism>
<gene>
    <name evidence="1" type="primary">psaB</name>
    <name type="ordered locus">MoinCp020</name>
</gene>
<comment type="function">
    <text evidence="1">PsaA and PsaB bind P700, the primary electron donor of photosystem I (PSI), as well as the electron acceptors A0, A1 and FX. PSI is a plastocyanin-ferredoxin oxidoreductase, converting photonic excitation into a charge separation, which transfers an electron from the donor P700 chlorophyll pair to the spectroscopically characterized acceptors A0, A1, FX, FA and FB in turn. Oxidized P700 is reduced on the lumenal side of the thylakoid membrane by plastocyanin.</text>
</comment>
<comment type="catalytic activity">
    <reaction evidence="1">
        <text>reduced [plastocyanin] + hnu + oxidized [2Fe-2S]-[ferredoxin] = oxidized [plastocyanin] + reduced [2Fe-2S]-[ferredoxin]</text>
        <dbReference type="Rhea" id="RHEA:30407"/>
        <dbReference type="Rhea" id="RHEA-COMP:10000"/>
        <dbReference type="Rhea" id="RHEA-COMP:10001"/>
        <dbReference type="Rhea" id="RHEA-COMP:10039"/>
        <dbReference type="Rhea" id="RHEA-COMP:10040"/>
        <dbReference type="ChEBI" id="CHEBI:29036"/>
        <dbReference type="ChEBI" id="CHEBI:30212"/>
        <dbReference type="ChEBI" id="CHEBI:33737"/>
        <dbReference type="ChEBI" id="CHEBI:33738"/>
        <dbReference type="ChEBI" id="CHEBI:49552"/>
        <dbReference type="EC" id="1.97.1.12"/>
    </reaction>
</comment>
<comment type="cofactor">
    <text evidence="1">P700 is a chlorophyll a/chlorophyll a' dimer, A0 is one or more chlorophyll a, A1 is one or both phylloquinones and FX is a shared 4Fe-4S iron-sulfur center.</text>
</comment>
<comment type="subunit">
    <text evidence="1">The PsaA/B heterodimer binds the P700 chlorophyll special pair and subsequent electron acceptors. PSI consists of a core antenna complex that captures photons, and an electron transfer chain that converts photonic excitation into a charge separation. The eukaryotic PSI reaction center is composed of at least 11 subunits.</text>
</comment>
<comment type="subcellular location">
    <subcellularLocation>
        <location>Plastid</location>
        <location>Chloroplast thylakoid membrane</location>
        <topology>Multi-pass membrane protein</topology>
    </subcellularLocation>
</comment>
<comment type="similarity">
    <text evidence="1">Belongs to the PsaA/PsaB family.</text>
</comment>
<protein>
    <recommendedName>
        <fullName evidence="1">Photosystem I P700 chlorophyll a apoprotein A2</fullName>
        <ecNumber evidence="1">1.97.1.12</ecNumber>
    </recommendedName>
    <alternativeName>
        <fullName evidence="1">PSI-B</fullName>
    </alternativeName>
    <alternativeName>
        <fullName evidence="1">PsaB</fullName>
    </alternativeName>
</protein>
<sequence length="734" mass="82385">MALRFPRFSQGLAQDPTTRRIWFGIATAHDFESHDDITEERLYQNIFASHFGQLAIIFLWTSGNLFHVAWQGNFEAWVQDPLHVRPIAHAIWDPHFGQPAVEAFTRGGALGPVNIAYSGVYQWWYTIGLRTNGDLYNGALFLLFISAISLIAGWLHLQPKWKPSVSWFKNAESRLNHHLSGLFGVSSLAWTGHLVHVAIPGSRGEYVRWNNFLDVLPHPQGLGPLFTGQWNLYAQNPDSSSHLFGNSQGAGTAILTLLGGFHPQTQSLWLTDIAHHHLAIAFIFLIAGHMYRTNFGIGHSIKNLLEAHIPPGGRLGRGHKGLYDTINNSIHFQLGLALASLGVITSLVAQHMYSLPAYAFIAQDFTTQAALYTHHQYIAGFIMTGAFAHGAIFFIRDYNPEQNEDNVLARMLDHKEAIISHLSWASLFLGFHTLGLYVHNDVMLAFGTPEKQILIEPIFAQWIQSAHGKTSYGFDVLLSSTNGPAFNAGRSIWLPGWLNAINENSNSLFLTIGPGDFLVHHAIALGLHTTTLILVKGALDARGSKLMPDKKDFGYSFPCDGPGRGGTCDISAWDAFYLAVFWMLNTIGWVTFYWHWKHITLWQGNVSQFNESSTYLMGWLRDYLWLNSSQLINGYNPFGMNSLSVWAWMFLFGHLVWATGFMFLISWRGYWQELIETLAWAHERTPLANLIRWRDKPVALSIVQARLVGLAHFSVGYIFTYAAFLIASTSGKFG</sequence>
<keyword id="KW-0004">4Fe-4S</keyword>
<keyword id="KW-0148">Chlorophyll</keyword>
<keyword id="KW-0150">Chloroplast</keyword>
<keyword id="KW-0157">Chromophore</keyword>
<keyword id="KW-0249">Electron transport</keyword>
<keyword id="KW-0408">Iron</keyword>
<keyword id="KW-0411">Iron-sulfur</keyword>
<keyword id="KW-0460">Magnesium</keyword>
<keyword id="KW-0472">Membrane</keyword>
<keyword id="KW-0479">Metal-binding</keyword>
<keyword id="KW-0560">Oxidoreductase</keyword>
<keyword id="KW-0602">Photosynthesis</keyword>
<keyword id="KW-0603">Photosystem I</keyword>
<keyword id="KW-0934">Plastid</keyword>
<keyword id="KW-0793">Thylakoid</keyword>
<keyword id="KW-0812">Transmembrane</keyword>
<keyword id="KW-1133">Transmembrane helix</keyword>
<keyword id="KW-0813">Transport</keyword>
<name>PSAB_MORIN</name>
<reference key="1">
    <citation type="submission" date="2005-09" db="EMBL/GenBank/DDBJ databases">
        <title>The chloroplast genome of mulberry: structural features and comparative analysis.</title>
        <authorList>
            <person name="Ravi V."/>
            <person name="Khurana J.P."/>
            <person name="Tyagi A.K."/>
            <person name="Khurana P."/>
        </authorList>
    </citation>
    <scope>NUCLEOTIDE SEQUENCE [LARGE SCALE GENOMIC DNA]</scope>
    <source>
        <strain>cv. K2</strain>
    </source>
</reference>
<dbReference type="EC" id="1.97.1.12" evidence="1"/>
<dbReference type="EMBL" id="DQ226511">
    <property type="protein sequence ID" value="ABB20957.1"/>
    <property type="molecule type" value="Genomic_DNA"/>
</dbReference>
<dbReference type="RefSeq" id="YP_762260.1">
    <property type="nucleotide sequence ID" value="NC_008359.1"/>
</dbReference>
<dbReference type="SMR" id="Q09X18"/>
<dbReference type="GeneID" id="4290568"/>
<dbReference type="GO" id="GO:0009535">
    <property type="term" value="C:chloroplast thylakoid membrane"/>
    <property type="evidence" value="ECO:0007669"/>
    <property type="project" value="UniProtKB-SubCell"/>
</dbReference>
<dbReference type="GO" id="GO:0009522">
    <property type="term" value="C:photosystem I"/>
    <property type="evidence" value="ECO:0007669"/>
    <property type="project" value="UniProtKB-KW"/>
</dbReference>
<dbReference type="GO" id="GO:0051539">
    <property type="term" value="F:4 iron, 4 sulfur cluster binding"/>
    <property type="evidence" value="ECO:0007669"/>
    <property type="project" value="UniProtKB-KW"/>
</dbReference>
<dbReference type="GO" id="GO:0016168">
    <property type="term" value="F:chlorophyll binding"/>
    <property type="evidence" value="ECO:0007669"/>
    <property type="project" value="UniProtKB-KW"/>
</dbReference>
<dbReference type="GO" id="GO:0009055">
    <property type="term" value="F:electron transfer activity"/>
    <property type="evidence" value="ECO:0007669"/>
    <property type="project" value="UniProtKB-UniRule"/>
</dbReference>
<dbReference type="GO" id="GO:0000287">
    <property type="term" value="F:magnesium ion binding"/>
    <property type="evidence" value="ECO:0007669"/>
    <property type="project" value="UniProtKB-UniRule"/>
</dbReference>
<dbReference type="GO" id="GO:0016491">
    <property type="term" value="F:oxidoreductase activity"/>
    <property type="evidence" value="ECO:0007669"/>
    <property type="project" value="UniProtKB-KW"/>
</dbReference>
<dbReference type="GO" id="GO:0015979">
    <property type="term" value="P:photosynthesis"/>
    <property type="evidence" value="ECO:0007669"/>
    <property type="project" value="UniProtKB-UniRule"/>
</dbReference>
<dbReference type="FunFam" id="1.20.1130.10:FF:000001">
    <property type="entry name" value="Photosystem I P700 chlorophyll a apoprotein A2"/>
    <property type="match status" value="1"/>
</dbReference>
<dbReference type="Gene3D" id="1.20.1130.10">
    <property type="entry name" value="Photosystem I PsaA/PsaB"/>
    <property type="match status" value="1"/>
</dbReference>
<dbReference type="HAMAP" id="MF_00482">
    <property type="entry name" value="PSI_PsaB"/>
    <property type="match status" value="1"/>
</dbReference>
<dbReference type="InterPro" id="IPR001280">
    <property type="entry name" value="PSI_PsaA/B"/>
</dbReference>
<dbReference type="InterPro" id="IPR020586">
    <property type="entry name" value="PSI_PsaA/B_CS"/>
</dbReference>
<dbReference type="InterPro" id="IPR036408">
    <property type="entry name" value="PSI_PsaA/B_sf"/>
</dbReference>
<dbReference type="InterPro" id="IPR006244">
    <property type="entry name" value="PSI_PsaB"/>
</dbReference>
<dbReference type="NCBIfam" id="TIGR01336">
    <property type="entry name" value="psaB"/>
    <property type="match status" value="1"/>
</dbReference>
<dbReference type="PANTHER" id="PTHR30128">
    <property type="entry name" value="OUTER MEMBRANE PROTEIN, OMPA-RELATED"/>
    <property type="match status" value="1"/>
</dbReference>
<dbReference type="PANTHER" id="PTHR30128:SF19">
    <property type="entry name" value="PHOTOSYSTEM I P700 CHLOROPHYLL A APOPROTEIN A1-RELATED"/>
    <property type="match status" value="1"/>
</dbReference>
<dbReference type="Pfam" id="PF00223">
    <property type="entry name" value="PsaA_PsaB"/>
    <property type="match status" value="1"/>
</dbReference>
<dbReference type="PIRSF" id="PIRSF002905">
    <property type="entry name" value="PSI_A"/>
    <property type="match status" value="1"/>
</dbReference>
<dbReference type="PRINTS" id="PR00257">
    <property type="entry name" value="PHOTSYSPSAAB"/>
</dbReference>
<dbReference type="SUPFAM" id="SSF81558">
    <property type="entry name" value="Photosystem I subunits PsaA/PsaB"/>
    <property type="match status" value="1"/>
</dbReference>
<dbReference type="PROSITE" id="PS00419">
    <property type="entry name" value="PHOTOSYSTEM_I_PSAAB"/>
    <property type="match status" value="1"/>
</dbReference>
<accession>Q09X18</accession>
<feature type="chain" id="PRO_0000277121" description="Photosystem I P700 chlorophyll a apoprotein A2">
    <location>
        <begin position="1"/>
        <end position="734"/>
    </location>
</feature>
<feature type="transmembrane region" description="Helical; Name=I" evidence="1">
    <location>
        <begin position="46"/>
        <end position="69"/>
    </location>
</feature>
<feature type="transmembrane region" description="Helical; Name=II" evidence="1">
    <location>
        <begin position="135"/>
        <end position="158"/>
    </location>
</feature>
<feature type="transmembrane region" description="Helical; Name=III" evidence="1">
    <location>
        <begin position="175"/>
        <end position="199"/>
    </location>
</feature>
<feature type="transmembrane region" description="Helical; Name=IV" evidence="1">
    <location>
        <begin position="273"/>
        <end position="291"/>
    </location>
</feature>
<feature type="transmembrane region" description="Helical; Name=V" evidence="1">
    <location>
        <begin position="330"/>
        <end position="353"/>
    </location>
</feature>
<feature type="transmembrane region" description="Helical; Name=VI" evidence="1">
    <location>
        <begin position="369"/>
        <end position="395"/>
    </location>
</feature>
<feature type="transmembrane region" description="Helical; Name=VII" evidence="1">
    <location>
        <begin position="417"/>
        <end position="439"/>
    </location>
</feature>
<feature type="transmembrane region" description="Helical; Name=VIII" evidence="1">
    <location>
        <begin position="517"/>
        <end position="535"/>
    </location>
</feature>
<feature type="transmembrane region" description="Helical; Name=IX" evidence="1">
    <location>
        <begin position="575"/>
        <end position="596"/>
    </location>
</feature>
<feature type="transmembrane region" description="Helical; Name=X" evidence="1">
    <location>
        <begin position="643"/>
        <end position="665"/>
    </location>
</feature>
<feature type="transmembrane region" description="Helical; Name=XI" evidence="1">
    <location>
        <begin position="707"/>
        <end position="727"/>
    </location>
</feature>
<feature type="binding site" evidence="1">
    <location>
        <position position="559"/>
    </location>
    <ligand>
        <name>[4Fe-4S] cluster</name>
        <dbReference type="ChEBI" id="CHEBI:49883"/>
        <note>ligand shared between dimeric partners</note>
    </ligand>
</feature>
<feature type="binding site" evidence="1">
    <location>
        <position position="568"/>
    </location>
    <ligand>
        <name>[4Fe-4S] cluster</name>
        <dbReference type="ChEBI" id="CHEBI:49883"/>
        <note>ligand shared between dimeric partners</note>
    </ligand>
</feature>
<feature type="binding site" description="axial binding residue" evidence="1">
    <location>
        <position position="654"/>
    </location>
    <ligand>
        <name>chlorophyll a</name>
        <dbReference type="ChEBI" id="CHEBI:58416"/>
        <label>B1</label>
    </ligand>
    <ligandPart>
        <name>Mg</name>
        <dbReference type="ChEBI" id="CHEBI:25107"/>
    </ligandPart>
</feature>
<feature type="binding site" description="axial binding residue" evidence="1">
    <location>
        <position position="662"/>
    </location>
    <ligand>
        <name>chlorophyll a</name>
        <dbReference type="ChEBI" id="CHEBI:58416"/>
        <label>B3</label>
    </ligand>
    <ligandPart>
        <name>Mg</name>
        <dbReference type="ChEBI" id="CHEBI:25107"/>
    </ligandPart>
</feature>
<feature type="binding site" evidence="1">
    <location>
        <position position="670"/>
    </location>
    <ligand>
        <name>chlorophyll a</name>
        <dbReference type="ChEBI" id="CHEBI:58416"/>
        <label>B3</label>
    </ligand>
</feature>
<feature type="binding site" evidence="1">
    <location>
        <position position="671"/>
    </location>
    <ligand>
        <name>phylloquinone</name>
        <dbReference type="ChEBI" id="CHEBI:18067"/>
        <label>B</label>
    </ligand>
</feature>
<evidence type="ECO:0000255" key="1">
    <source>
        <dbReference type="HAMAP-Rule" id="MF_00482"/>
    </source>
</evidence>